<sequence length="218" mass="23669">MKFFIDTANLDQIREAHDLGVLDGVTTNPSLMAKEGIKGVENQRRHYVEICNIVQGDVSAEVIATDYEGMVREGKELAALNPHIVVKVPCIADGIKAIKHFSGQGIRTNCTLVFSTGQALLAAKAGATYVSPFVGRLDDICEDGVGLVADIVRMYRFYNYPTQVLAASIRSSKHIMECVEAGADVATCPLSAIKGLLNHPLTDAGLKKFLEDYKKVNE</sequence>
<dbReference type="EC" id="2.2.1.2" evidence="1"/>
<dbReference type="EMBL" id="CR626927">
    <property type="protein sequence ID" value="CAH08777.1"/>
    <property type="molecule type" value="Genomic_DNA"/>
</dbReference>
<dbReference type="SMR" id="Q5LAU6"/>
<dbReference type="PaxDb" id="272559-BF9343_2996"/>
<dbReference type="KEGG" id="bfs:BF9343_2996"/>
<dbReference type="eggNOG" id="COG0176">
    <property type="taxonomic scope" value="Bacteria"/>
</dbReference>
<dbReference type="HOGENOM" id="CLU_079764_0_0_10"/>
<dbReference type="UniPathway" id="UPA00115">
    <property type="reaction ID" value="UER00414"/>
</dbReference>
<dbReference type="Proteomes" id="UP000006731">
    <property type="component" value="Chromosome"/>
</dbReference>
<dbReference type="GO" id="GO:0005737">
    <property type="term" value="C:cytoplasm"/>
    <property type="evidence" value="ECO:0007669"/>
    <property type="project" value="UniProtKB-SubCell"/>
</dbReference>
<dbReference type="GO" id="GO:0016832">
    <property type="term" value="F:aldehyde-lyase activity"/>
    <property type="evidence" value="ECO:0007669"/>
    <property type="project" value="InterPro"/>
</dbReference>
<dbReference type="GO" id="GO:0004801">
    <property type="term" value="F:transaldolase activity"/>
    <property type="evidence" value="ECO:0007669"/>
    <property type="project" value="UniProtKB-UniRule"/>
</dbReference>
<dbReference type="GO" id="GO:0005975">
    <property type="term" value="P:carbohydrate metabolic process"/>
    <property type="evidence" value="ECO:0007669"/>
    <property type="project" value="InterPro"/>
</dbReference>
<dbReference type="GO" id="GO:0006098">
    <property type="term" value="P:pentose-phosphate shunt"/>
    <property type="evidence" value="ECO:0007669"/>
    <property type="project" value="UniProtKB-UniRule"/>
</dbReference>
<dbReference type="CDD" id="cd00956">
    <property type="entry name" value="Transaldolase_FSA"/>
    <property type="match status" value="1"/>
</dbReference>
<dbReference type="FunFam" id="3.20.20.70:FF:000018">
    <property type="entry name" value="Probable transaldolase"/>
    <property type="match status" value="1"/>
</dbReference>
<dbReference type="Gene3D" id="3.20.20.70">
    <property type="entry name" value="Aldolase class I"/>
    <property type="match status" value="1"/>
</dbReference>
<dbReference type="HAMAP" id="MF_00494">
    <property type="entry name" value="Transaldolase_3b"/>
    <property type="match status" value="1"/>
</dbReference>
<dbReference type="InterPro" id="IPR013785">
    <property type="entry name" value="Aldolase_TIM"/>
</dbReference>
<dbReference type="InterPro" id="IPR001585">
    <property type="entry name" value="TAL/FSA"/>
</dbReference>
<dbReference type="InterPro" id="IPR022999">
    <property type="entry name" value="Transaldolase_3B"/>
</dbReference>
<dbReference type="InterPro" id="IPR004731">
    <property type="entry name" value="Transaldolase_3B/F6P_aldolase"/>
</dbReference>
<dbReference type="InterPro" id="IPR018225">
    <property type="entry name" value="Transaldolase_AS"/>
</dbReference>
<dbReference type="InterPro" id="IPR033919">
    <property type="entry name" value="TSA/FSA_arc/bac"/>
</dbReference>
<dbReference type="NCBIfam" id="TIGR00875">
    <property type="entry name" value="fsa_talC_mipB"/>
    <property type="match status" value="1"/>
</dbReference>
<dbReference type="PANTHER" id="PTHR10683:SF40">
    <property type="entry name" value="FRUCTOSE-6-PHOSPHATE ALDOLASE 1-RELATED"/>
    <property type="match status" value="1"/>
</dbReference>
<dbReference type="PANTHER" id="PTHR10683">
    <property type="entry name" value="TRANSALDOLASE"/>
    <property type="match status" value="1"/>
</dbReference>
<dbReference type="Pfam" id="PF00923">
    <property type="entry name" value="TAL_FSA"/>
    <property type="match status" value="1"/>
</dbReference>
<dbReference type="SUPFAM" id="SSF51569">
    <property type="entry name" value="Aldolase"/>
    <property type="match status" value="1"/>
</dbReference>
<dbReference type="PROSITE" id="PS01054">
    <property type="entry name" value="TRANSALDOLASE_1"/>
    <property type="match status" value="1"/>
</dbReference>
<feature type="chain" id="PRO_1000126276" description="Probable transaldolase">
    <location>
        <begin position="1"/>
        <end position="218"/>
    </location>
</feature>
<feature type="active site" description="Schiff-base intermediate with substrate" evidence="1">
    <location>
        <position position="87"/>
    </location>
</feature>
<reference key="1">
    <citation type="journal article" date="2005" name="Science">
        <title>Extensive DNA inversions in the B. fragilis genome control variable gene expression.</title>
        <authorList>
            <person name="Cerdeno-Tarraga A.-M."/>
            <person name="Patrick S."/>
            <person name="Crossman L.C."/>
            <person name="Blakely G."/>
            <person name="Abratt V."/>
            <person name="Lennard N."/>
            <person name="Poxton I."/>
            <person name="Duerden B."/>
            <person name="Harris B."/>
            <person name="Quail M.A."/>
            <person name="Barron A."/>
            <person name="Clark L."/>
            <person name="Corton C."/>
            <person name="Doggett J."/>
            <person name="Holden M.T.G."/>
            <person name="Larke N."/>
            <person name="Line A."/>
            <person name="Lord A."/>
            <person name="Norbertczak H."/>
            <person name="Ormond D."/>
            <person name="Price C."/>
            <person name="Rabbinowitsch E."/>
            <person name="Woodward J."/>
            <person name="Barrell B.G."/>
            <person name="Parkhill J."/>
        </authorList>
    </citation>
    <scope>NUCLEOTIDE SEQUENCE [LARGE SCALE GENOMIC DNA]</scope>
    <source>
        <strain>ATCC 25285 / DSM 2151 / CCUG 4856 / JCM 11019 / LMG 10263 / NCTC 9343 / Onslow / VPI 2553 / EN-2</strain>
    </source>
</reference>
<name>TAL_BACFN</name>
<keyword id="KW-0963">Cytoplasm</keyword>
<keyword id="KW-0570">Pentose shunt</keyword>
<keyword id="KW-0704">Schiff base</keyword>
<keyword id="KW-0808">Transferase</keyword>
<comment type="function">
    <text evidence="1">Transaldolase is important for the balance of metabolites in the pentose-phosphate pathway.</text>
</comment>
<comment type="catalytic activity">
    <reaction evidence="1">
        <text>D-sedoheptulose 7-phosphate + D-glyceraldehyde 3-phosphate = D-erythrose 4-phosphate + beta-D-fructose 6-phosphate</text>
        <dbReference type="Rhea" id="RHEA:17053"/>
        <dbReference type="ChEBI" id="CHEBI:16897"/>
        <dbReference type="ChEBI" id="CHEBI:57483"/>
        <dbReference type="ChEBI" id="CHEBI:57634"/>
        <dbReference type="ChEBI" id="CHEBI:59776"/>
        <dbReference type="EC" id="2.2.1.2"/>
    </reaction>
</comment>
<comment type="pathway">
    <text evidence="1">Carbohydrate degradation; pentose phosphate pathway; D-glyceraldehyde 3-phosphate and beta-D-fructose 6-phosphate from D-ribose 5-phosphate and D-xylulose 5-phosphate (non-oxidative stage): step 2/3.</text>
</comment>
<comment type="subcellular location">
    <subcellularLocation>
        <location evidence="1">Cytoplasm</location>
    </subcellularLocation>
</comment>
<comment type="similarity">
    <text evidence="1">Belongs to the transaldolase family. Type 3B subfamily.</text>
</comment>
<evidence type="ECO:0000255" key="1">
    <source>
        <dbReference type="HAMAP-Rule" id="MF_00494"/>
    </source>
</evidence>
<organism>
    <name type="scientific">Bacteroides fragilis (strain ATCC 25285 / DSM 2151 / CCUG 4856 / JCM 11019 / LMG 10263 / NCTC 9343 / Onslow / VPI 2553 / EN-2)</name>
    <dbReference type="NCBI Taxonomy" id="272559"/>
    <lineage>
        <taxon>Bacteria</taxon>
        <taxon>Pseudomonadati</taxon>
        <taxon>Bacteroidota</taxon>
        <taxon>Bacteroidia</taxon>
        <taxon>Bacteroidales</taxon>
        <taxon>Bacteroidaceae</taxon>
        <taxon>Bacteroides</taxon>
    </lineage>
</organism>
<protein>
    <recommendedName>
        <fullName evidence="1">Probable transaldolase</fullName>
        <ecNumber evidence="1">2.2.1.2</ecNumber>
    </recommendedName>
</protein>
<accession>Q5LAU6</accession>
<gene>
    <name evidence="1" type="primary">tal</name>
    <name type="ordered locus">BF3082</name>
</gene>
<proteinExistence type="inferred from homology"/>